<proteinExistence type="inferred from homology"/>
<organism>
    <name type="scientific">Desulfotalea psychrophila (strain LSv54 / DSM 12343)</name>
    <dbReference type="NCBI Taxonomy" id="177439"/>
    <lineage>
        <taxon>Bacteria</taxon>
        <taxon>Pseudomonadati</taxon>
        <taxon>Thermodesulfobacteriota</taxon>
        <taxon>Desulfobulbia</taxon>
        <taxon>Desulfobulbales</taxon>
        <taxon>Desulfocapsaceae</taxon>
        <taxon>Desulfotalea</taxon>
    </lineage>
</organism>
<comment type="function">
    <text evidence="1">Catalyzes the NADPH-dependent reduction of N-acetyl-5-glutamyl phosphate to yield N-acetyl-L-glutamate 5-semialdehyde.</text>
</comment>
<comment type="catalytic activity">
    <reaction evidence="1">
        <text>N-acetyl-L-glutamate 5-semialdehyde + phosphate + NADP(+) = N-acetyl-L-glutamyl 5-phosphate + NADPH + H(+)</text>
        <dbReference type="Rhea" id="RHEA:21588"/>
        <dbReference type="ChEBI" id="CHEBI:15378"/>
        <dbReference type="ChEBI" id="CHEBI:29123"/>
        <dbReference type="ChEBI" id="CHEBI:43474"/>
        <dbReference type="ChEBI" id="CHEBI:57783"/>
        <dbReference type="ChEBI" id="CHEBI:57936"/>
        <dbReference type="ChEBI" id="CHEBI:58349"/>
        <dbReference type="EC" id="1.2.1.38"/>
    </reaction>
</comment>
<comment type="pathway">
    <text evidence="1">Amino-acid biosynthesis; L-arginine biosynthesis; N(2)-acetyl-L-ornithine from L-glutamate: step 3/4.</text>
</comment>
<comment type="subcellular location">
    <subcellularLocation>
        <location evidence="1">Cytoplasm</location>
    </subcellularLocation>
</comment>
<comment type="similarity">
    <text evidence="1">Belongs to the NAGSA dehydrogenase family. Type 1 subfamily.</text>
</comment>
<keyword id="KW-0028">Amino-acid biosynthesis</keyword>
<keyword id="KW-0055">Arginine biosynthesis</keyword>
<keyword id="KW-0963">Cytoplasm</keyword>
<keyword id="KW-0521">NADP</keyword>
<keyword id="KW-0560">Oxidoreductase</keyword>
<keyword id="KW-1185">Reference proteome</keyword>
<gene>
    <name evidence="1" type="primary">argC</name>
    <name type="ordered locus">DP1325</name>
</gene>
<evidence type="ECO:0000255" key="1">
    <source>
        <dbReference type="HAMAP-Rule" id="MF_00150"/>
    </source>
</evidence>
<reference key="1">
    <citation type="journal article" date="2004" name="Environ. Microbiol.">
        <title>The genome of Desulfotalea psychrophila, a sulfate-reducing bacterium from permanently cold Arctic sediments.</title>
        <authorList>
            <person name="Rabus R."/>
            <person name="Ruepp A."/>
            <person name="Frickey T."/>
            <person name="Rattei T."/>
            <person name="Fartmann B."/>
            <person name="Stark M."/>
            <person name="Bauer M."/>
            <person name="Zibat A."/>
            <person name="Lombardot T."/>
            <person name="Becker I."/>
            <person name="Amann J."/>
            <person name="Gellner K."/>
            <person name="Teeling H."/>
            <person name="Leuschner W.D."/>
            <person name="Gloeckner F.-O."/>
            <person name="Lupas A.N."/>
            <person name="Amann R."/>
            <person name="Klenk H.-P."/>
        </authorList>
    </citation>
    <scope>NUCLEOTIDE SEQUENCE [LARGE SCALE GENOMIC DNA]</scope>
    <source>
        <strain>DSM 12343 / LSv54</strain>
    </source>
</reference>
<sequence>MIKIAIIGASGYTGVELSRLLCNHPQVEITAVTSRQYAGVALSEVFPNLRGRTSLICENLTIEELCLRADLFFAAVPHKTAMNIVPQLLAAGKKVIDLSADFRLNSAAVYEEWYQEHSAKEFLSQAVYGLPELYREQIAKTQLLANPGCYPTSIILGMAPLLRAGIIKPQSIIADSKSGTTGAGRGAKVGSLFCEVNDGFKAYGVGRKHRHTPEIEQELGKLANTDFNITFTPHLLPISRGILSTIYADLNCEIEADEVQALYEEMYKDEPFVRVLPLGSAPATQYVRGSNYCDIGFAIDQTTGRIIVMSAIDNVVKGAAGQAVQNMNIMCGFAEQEGLEIVPLFP</sequence>
<feature type="chain" id="PRO_1000010992" description="N-acetyl-gamma-glutamyl-phosphate reductase">
    <location>
        <begin position="1"/>
        <end position="346"/>
    </location>
</feature>
<feature type="active site" evidence="1">
    <location>
        <position position="149"/>
    </location>
</feature>
<accession>Q6ANM0</accession>
<name>ARGC_DESPS</name>
<protein>
    <recommendedName>
        <fullName evidence="1">N-acetyl-gamma-glutamyl-phosphate reductase</fullName>
        <shortName evidence="1">AGPR</shortName>
        <ecNumber evidence="1">1.2.1.38</ecNumber>
    </recommendedName>
    <alternativeName>
        <fullName evidence="1">N-acetyl-glutamate semialdehyde dehydrogenase</fullName>
        <shortName evidence="1">NAGSA dehydrogenase</shortName>
    </alternativeName>
</protein>
<dbReference type="EC" id="1.2.1.38" evidence="1"/>
<dbReference type="EMBL" id="CR522870">
    <property type="protein sequence ID" value="CAG36054.1"/>
    <property type="molecule type" value="Genomic_DNA"/>
</dbReference>
<dbReference type="RefSeq" id="WP_011188566.1">
    <property type="nucleotide sequence ID" value="NC_006138.1"/>
</dbReference>
<dbReference type="SMR" id="Q6ANM0"/>
<dbReference type="STRING" id="177439.DP1325"/>
<dbReference type="KEGG" id="dps:DP1325"/>
<dbReference type="eggNOG" id="COG0002">
    <property type="taxonomic scope" value="Bacteria"/>
</dbReference>
<dbReference type="HOGENOM" id="CLU_006384_0_1_7"/>
<dbReference type="OrthoDB" id="9801289at2"/>
<dbReference type="UniPathway" id="UPA00068">
    <property type="reaction ID" value="UER00108"/>
</dbReference>
<dbReference type="Proteomes" id="UP000000602">
    <property type="component" value="Chromosome"/>
</dbReference>
<dbReference type="GO" id="GO:0005737">
    <property type="term" value="C:cytoplasm"/>
    <property type="evidence" value="ECO:0007669"/>
    <property type="project" value="UniProtKB-SubCell"/>
</dbReference>
<dbReference type="GO" id="GO:0003942">
    <property type="term" value="F:N-acetyl-gamma-glutamyl-phosphate reductase activity"/>
    <property type="evidence" value="ECO:0007669"/>
    <property type="project" value="UniProtKB-UniRule"/>
</dbReference>
<dbReference type="GO" id="GO:0051287">
    <property type="term" value="F:NAD binding"/>
    <property type="evidence" value="ECO:0007669"/>
    <property type="project" value="InterPro"/>
</dbReference>
<dbReference type="GO" id="GO:0070401">
    <property type="term" value="F:NADP+ binding"/>
    <property type="evidence" value="ECO:0007669"/>
    <property type="project" value="InterPro"/>
</dbReference>
<dbReference type="GO" id="GO:0006526">
    <property type="term" value="P:L-arginine biosynthetic process"/>
    <property type="evidence" value="ECO:0007669"/>
    <property type="project" value="UniProtKB-UniRule"/>
</dbReference>
<dbReference type="CDD" id="cd23934">
    <property type="entry name" value="AGPR_1_C"/>
    <property type="match status" value="1"/>
</dbReference>
<dbReference type="CDD" id="cd17895">
    <property type="entry name" value="AGPR_1_N"/>
    <property type="match status" value="1"/>
</dbReference>
<dbReference type="FunFam" id="3.30.360.10:FF:000014">
    <property type="entry name" value="N-acetyl-gamma-glutamyl-phosphate reductase"/>
    <property type="match status" value="1"/>
</dbReference>
<dbReference type="Gene3D" id="3.30.360.10">
    <property type="entry name" value="Dihydrodipicolinate Reductase, domain 2"/>
    <property type="match status" value="1"/>
</dbReference>
<dbReference type="Gene3D" id="3.40.50.720">
    <property type="entry name" value="NAD(P)-binding Rossmann-like Domain"/>
    <property type="match status" value="1"/>
</dbReference>
<dbReference type="HAMAP" id="MF_00150">
    <property type="entry name" value="ArgC_type1"/>
    <property type="match status" value="1"/>
</dbReference>
<dbReference type="InterPro" id="IPR023013">
    <property type="entry name" value="AGPR_AS"/>
</dbReference>
<dbReference type="InterPro" id="IPR000706">
    <property type="entry name" value="AGPR_type-1"/>
</dbReference>
<dbReference type="InterPro" id="IPR036291">
    <property type="entry name" value="NAD(P)-bd_dom_sf"/>
</dbReference>
<dbReference type="InterPro" id="IPR050085">
    <property type="entry name" value="NAGSA_dehydrogenase"/>
</dbReference>
<dbReference type="InterPro" id="IPR000534">
    <property type="entry name" value="Semialdehyde_DH_NAD-bd"/>
</dbReference>
<dbReference type="NCBIfam" id="TIGR01850">
    <property type="entry name" value="argC"/>
    <property type="match status" value="1"/>
</dbReference>
<dbReference type="PANTHER" id="PTHR32338:SF10">
    <property type="entry name" value="N-ACETYL-GAMMA-GLUTAMYL-PHOSPHATE REDUCTASE, CHLOROPLASTIC-RELATED"/>
    <property type="match status" value="1"/>
</dbReference>
<dbReference type="PANTHER" id="PTHR32338">
    <property type="entry name" value="N-ACETYL-GAMMA-GLUTAMYL-PHOSPHATE REDUCTASE, CHLOROPLASTIC-RELATED-RELATED"/>
    <property type="match status" value="1"/>
</dbReference>
<dbReference type="Pfam" id="PF01118">
    <property type="entry name" value="Semialdhyde_dh"/>
    <property type="match status" value="1"/>
</dbReference>
<dbReference type="Pfam" id="PF22698">
    <property type="entry name" value="Semialdhyde_dhC_1"/>
    <property type="match status" value="1"/>
</dbReference>
<dbReference type="SMART" id="SM00859">
    <property type="entry name" value="Semialdhyde_dh"/>
    <property type="match status" value="1"/>
</dbReference>
<dbReference type="SUPFAM" id="SSF55347">
    <property type="entry name" value="Glyceraldehyde-3-phosphate dehydrogenase-like, C-terminal domain"/>
    <property type="match status" value="1"/>
</dbReference>
<dbReference type="SUPFAM" id="SSF51735">
    <property type="entry name" value="NAD(P)-binding Rossmann-fold domains"/>
    <property type="match status" value="1"/>
</dbReference>
<dbReference type="PROSITE" id="PS01224">
    <property type="entry name" value="ARGC"/>
    <property type="match status" value="1"/>
</dbReference>